<accession>Q8F5K6</accession>
<organism>
    <name type="scientific">Leptospira interrogans serogroup Icterohaemorrhagiae serovar Lai (strain 56601)</name>
    <dbReference type="NCBI Taxonomy" id="189518"/>
    <lineage>
        <taxon>Bacteria</taxon>
        <taxon>Pseudomonadati</taxon>
        <taxon>Spirochaetota</taxon>
        <taxon>Spirochaetia</taxon>
        <taxon>Leptospirales</taxon>
        <taxon>Leptospiraceae</taxon>
        <taxon>Leptospira</taxon>
    </lineage>
</organism>
<comment type="function">
    <text evidence="1">Binds together with bS18 to 16S ribosomal RNA.</text>
</comment>
<comment type="similarity">
    <text evidence="1">Belongs to the bacterial ribosomal protein bS6 family.</text>
</comment>
<name>RS6_LEPIN</name>
<proteinExistence type="inferred from homology"/>
<keyword id="KW-1185">Reference proteome</keyword>
<keyword id="KW-0687">Ribonucleoprotein</keyword>
<keyword id="KW-0689">Ribosomal protein</keyword>
<keyword id="KW-0694">RNA-binding</keyword>
<keyword id="KW-0699">rRNA-binding</keyword>
<protein>
    <recommendedName>
        <fullName evidence="1">Small ribosomal subunit protein bS6</fullName>
    </recommendedName>
    <alternativeName>
        <fullName evidence="2">30S ribosomal protein S6</fullName>
    </alternativeName>
</protein>
<sequence length="91" mass="10711">MRNYELTTITRVSSREVAKSEIQETLKKHSVSVTAEEDWGQRKLWHPIKHEEQGIFHHYKCSADPNAIEKVEKEFLINQNILRSMVVRLHG</sequence>
<reference key="1">
    <citation type="journal article" date="2003" name="Nature">
        <title>Unique physiological and pathogenic features of Leptospira interrogans revealed by whole-genome sequencing.</title>
        <authorList>
            <person name="Ren S.-X."/>
            <person name="Fu G."/>
            <person name="Jiang X.-G."/>
            <person name="Zeng R."/>
            <person name="Miao Y.-G."/>
            <person name="Xu H."/>
            <person name="Zhang Y.-X."/>
            <person name="Xiong H."/>
            <person name="Lu G."/>
            <person name="Lu L.-F."/>
            <person name="Jiang H.-Q."/>
            <person name="Jia J."/>
            <person name="Tu Y.-F."/>
            <person name="Jiang J.-X."/>
            <person name="Gu W.-Y."/>
            <person name="Zhang Y.-Q."/>
            <person name="Cai Z."/>
            <person name="Sheng H.-H."/>
            <person name="Yin H.-F."/>
            <person name="Zhang Y."/>
            <person name="Zhu G.-F."/>
            <person name="Wan M."/>
            <person name="Huang H.-L."/>
            <person name="Qian Z."/>
            <person name="Wang S.-Y."/>
            <person name="Ma W."/>
            <person name="Yao Z.-J."/>
            <person name="Shen Y."/>
            <person name="Qiang B.-Q."/>
            <person name="Xia Q.-C."/>
            <person name="Guo X.-K."/>
            <person name="Danchin A."/>
            <person name="Saint Girons I."/>
            <person name="Somerville R.L."/>
            <person name="Wen Y.-M."/>
            <person name="Shi M.-H."/>
            <person name="Chen Z."/>
            <person name="Xu J.-G."/>
            <person name="Zhao G.-P."/>
        </authorList>
    </citation>
    <scope>NUCLEOTIDE SEQUENCE [LARGE SCALE GENOMIC DNA]</scope>
    <source>
        <strain>56601</strain>
    </source>
</reference>
<dbReference type="EMBL" id="AE010300">
    <property type="protein sequence ID" value="AAN48874.1"/>
    <property type="molecule type" value="Genomic_DNA"/>
</dbReference>
<dbReference type="RefSeq" id="NP_711856.1">
    <property type="nucleotide sequence ID" value="NC_004342.2"/>
</dbReference>
<dbReference type="RefSeq" id="WP_001246923.1">
    <property type="nucleotide sequence ID" value="NC_004342.2"/>
</dbReference>
<dbReference type="SMR" id="Q8F5K6"/>
<dbReference type="FunCoup" id="Q8F5K6">
    <property type="interactions" value="472"/>
</dbReference>
<dbReference type="STRING" id="189518.LA_1675"/>
<dbReference type="PaxDb" id="189518-LA_1675"/>
<dbReference type="EnsemblBacteria" id="AAN48874">
    <property type="protein sequence ID" value="AAN48874"/>
    <property type="gene ID" value="LA_1675"/>
</dbReference>
<dbReference type="GeneID" id="61141998"/>
<dbReference type="KEGG" id="lil:LA_1675"/>
<dbReference type="PATRIC" id="fig|189518.3.peg.1669"/>
<dbReference type="HOGENOM" id="CLU_113441_5_1_12"/>
<dbReference type="InParanoid" id="Q8F5K6"/>
<dbReference type="OrthoDB" id="9812702at2"/>
<dbReference type="PRO" id="PR:Q8F5K6"/>
<dbReference type="Proteomes" id="UP000001408">
    <property type="component" value="Chromosome I"/>
</dbReference>
<dbReference type="GO" id="GO:1990904">
    <property type="term" value="C:ribonucleoprotein complex"/>
    <property type="evidence" value="ECO:0007669"/>
    <property type="project" value="UniProtKB-KW"/>
</dbReference>
<dbReference type="GO" id="GO:0005840">
    <property type="term" value="C:ribosome"/>
    <property type="evidence" value="ECO:0007669"/>
    <property type="project" value="UniProtKB-KW"/>
</dbReference>
<dbReference type="GO" id="GO:0070181">
    <property type="term" value="F:small ribosomal subunit rRNA binding"/>
    <property type="evidence" value="ECO:0000318"/>
    <property type="project" value="GO_Central"/>
</dbReference>
<dbReference type="GO" id="GO:0003735">
    <property type="term" value="F:structural constituent of ribosome"/>
    <property type="evidence" value="ECO:0000318"/>
    <property type="project" value="GO_Central"/>
</dbReference>
<dbReference type="GO" id="GO:0006412">
    <property type="term" value="P:translation"/>
    <property type="evidence" value="ECO:0007669"/>
    <property type="project" value="UniProtKB-UniRule"/>
</dbReference>
<dbReference type="CDD" id="cd00473">
    <property type="entry name" value="bS6"/>
    <property type="match status" value="1"/>
</dbReference>
<dbReference type="FunFam" id="3.30.70.60:FF:000009">
    <property type="entry name" value="30S ribosomal protein S6"/>
    <property type="match status" value="1"/>
</dbReference>
<dbReference type="Gene3D" id="3.30.70.60">
    <property type="match status" value="1"/>
</dbReference>
<dbReference type="HAMAP" id="MF_00360">
    <property type="entry name" value="Ribosomal_bS6"/>
    <property type="match status" value="1"/>
</dbReference>
<dbReference type="InterPro" id="IPR000529">
    <property type="entry name" value="Ribosomal_bS6"/>
</dbReference>
<dbReference type="InterPro" id="IPR035980">
    <property type="entry name" value="Ribosomal_bS6_sf"/>
</dbReference>
<dbReference type="InterPro" id="IPR020814">
    <property type="entry name" value="Ribosomal_S6_plastid/chlpt"/>
</dbReference>
<dbReference type="InterPro" id="IPR014717">
    <property type="entry name" value="Transl_elong_EF1B/ribsomal_bS6"/>
</dbReference>
<dbReference type="NCBIfam" id="TIGR00166">
    <property type="entry name" value="S6"/>
    <property type="match status" value="1"/>
</dbReference>
<dbReference type="Pfam" id="PF01250">
    <property type="entry name" value="Ribosomal_S6"/>
    <property type="match status" value="1"/>
</dbReference>
<dbReference type="SUPFAM" id="SSF54995">
    <property type="entry name" value="Ribosomal protein S6"/>
    <property type="match status" value="1"/>
</dbReference>
<gene>
    <name evidence="1" type="primary">rpsF</name>
    <name type="ordered locus">LA_1675</name>
</gene>
<feature type="chain" id="PRO_0000176787" description="Small ribosomal subunit protein bS6">
    <location>
        <begin position="1"/>
        <end position="91"/>
    </location>
</feature>
<evidence type="ECO:0000255" key="1">
    <source>
        <dbReference type="HAMAP-Rule" id="MF_00360"/>
    </source>
</evidence>
<evidence type="ECO:0000305" key="2"/>